<gene>
    <name evidence="1" type="primary">rplN</name>
    <name type="ordered locus">CGSHiEE_08125</name>
</gene>
<dbReference type="EMBL" id="CP000671">
    <property type="protein sequence ID" value="ABQ98938.1"/>
    <property type="molecule type" value="Genomic_DNA"/>
</dbReference>
<dbReference type="SMR" id="A5UDT7"/>
<dbReference type="KEGG" id="hip:CGSHiEE_08125"/>
<dbReference type="HOGENOM" id="CLU_095071_2_1_6"/>
<dbReference type="GO" id="GO:0022625">
    <property type="term" value="C:cytosolic large ribosomal subunit"/>
    <property type="evidence" value="ECO:0007669"/>
    <property type="project" value="TreeGrafter"/>
</dbReference>
<dbReference type="GO" id="GO:0070180">
    <property type="term" value="F:large ribosomal subunit rRNA binding"/>
    <property type="evidence" value="ECO:0007669"/>
    <property type="project" value="TreeGrafter"/>
</dbReference>
<dbReference type="GO" id="GO:0003735">
    <property type="term" value="F:structural constituent of ribosome"/>
    <property type="evidence" value="ECO:0007669"/>
    <property type="project" value="InterPro"/>
</dbReference>
<dbReference type="GO" id="GO:0006412">
    <property type="term" value="P:translation"/>
    <property type="evidence" value="ECO:0007669"/>
    <property type="project" value="UniProtKB-UniRule"/>
</dbReference>
<dbReference type="CDD" id="cd00337">
    <property type="entry name" value="Ribosomal_uL14"/>
    <property type="match status" value="1"/>
</dbReference>
<dbReference type="FunFam" id="2.40.150.20:FF:000001">
    <property type="entry name" value="50S ribosomal protein L14"/>
    <property type="match status" value="1"/>
</dbReference>
<dbReference type="Gene3D" id="2.40.150.20">
    <property type="entry name" value="Ribosomal protein L14"/>
    <property type="match status" value="1"/>
</dbReference>
<dbReference type="HAMAP" id="MF_01367">
    <property type="entry name" value="Ribosomal_uL14"/>
    <property type="match status" value="1"/>
</dbReference>
<dbReference type="InterPro" id="IPR000218">
    <property type="entry name" value="Ribosomal_uL14"/>
</dbReference>
<dbReference type="InterPro" id="IPR005745">
    <property type="entry name" value="Ribosomal_uL14_bac-type"/>
</dbReference>
<dbReference type="InterPro" id="IPR019972">
    <property type="entry name" value="Ribosomal_uL14_CS"/>
</dbReference>
<dbReference type="InterPro" id="IPR036853">
    <property type="entry name" value="Ribosomal_uL14_sf"/>
</dbReference>
<dbReference type="NCBIfam" id="TIGR01067">
    <property type="entry name" value="rplN_bact"/>
    <property type="match status" value="1"/>
</dbReference>
<dbReference type="PANTHER" id="PTHR11761">
    <property type="entry name" value="50S/60S RIBOSOMAL PROTEIN L14/L23"/>
    <property type="match status" value="1"/>
</dbReference>
<dbReference type="PANTHER" id="PTHR11761:SF3">
    <property type="entry name" value="LARGE RIBOSOMAL SUBUNIT PROTEIN UL14M"/>
    <property type="match status" value="1"/>
</dbReference>
<dbReference type="Pfam" id="PF00238">
    <property type="entry name" value="Ribosomal_L14"/>
    <property type="match status" value="1"/>
</dbReference>
<dbReference type="SMART" id="SM01374">
    <property type="entry name" value="Ribosomal_L14"/>
    <property type="match status" value="1"/>
</dbReference>
<dbReference type="SUPFAM" id="SSF50193">
    <property type="entry name" value="Ribosomal protein L14"/>
    <property type="match status" value="1"/>
</dbReference>
<dbReference type="PROSITE" id="PS00049">
    <property type="entry name" value="RIBOSOMAL_L14"/>
    <property type="match status" value="1"/>
</dbReference>
<protein>
    <recommendedName>
        <fullName evidence="1">Large ribosomal subunit protein uL14</fullName>
    </recommendedName>
    <alternativeName>
        <fullName evidence="2">50S ribosomal protein L14</fullName>
    </alternativeName>
</protein>
<feature type="chain" id="PRO_1000055590" description="Large ribosomal subunit protein uL14">
    <location>
        <begin position="1"/>
        <end position="123"/>
    </location>
</feature>
<name>RL14_HAEIE</name>
<keyword id="KW-0687">Ribonucleoprotein</keyword>
<keyword id="KW-0689">Ribosomal protein</keyword>
<keyword id="KW-0694">RNA-binding</keyword>
<keyword id="KW-0699">rRNA-binding</keyword>
<sequence>MIQEQTMLDVADNSGARSVMCIKVLGGSHRRYAAIGDIIKITVKEAIPRGKVKKGDVLKAVVVRTKKGVRRPDGSVIRFDGNACVILNNNTEQPIGTRIFGPVTRELRSEKFMKIISLAPEVL</sequence>
<accession>A5UDT7</accession>
<evidence type="ECO:0000255" key="1">
    <source>
        <dbReference type="HAMAP-Rule" id="MF_01367"/>
    </source>
</evidence>
<evidence type="ECO:0000305" key="2"/>
<organism>
    <name type="scientific">Haemophilus influenzae (strain PittEE)</name>
    <dbReference type="NCBI Taxonomy" id="374930"/>
    <lineage>
        <taxon>Bacteria</taxon>
        <taxon>Pseudomonadati</taxon>
        <taxon>Pseudomonadota</taxon>
        <taxon>Gammaproteobacteria</taxon>
        <taxon>Pasteurellales</taxon>
        <taxon>Pasteurellaceae</taxon>
        <taxon>Haemophilus</taxon>
    </lineage>
</organism>
<comment type="function">
    <text evidence="1">Binds to 23S rRNA. Forms part of two intersubunit bridges in the 70S ribosome.</text>
</comment>
<comment type="subunit">
    <text evidence="1">Part of the 50S ribosomal subunit. Forms a cluster with proteins L3 and L19. In the 70S ribosome, L14 and L19 interact and together make contacts with the 16S rRNA in bridges B5 and B8.</text>
</comment>
<comment type="similarity">
    <text evidence="1">Belongs to the universal ribosomal protein uL14 family.</text>
</comment>
<proteinExistence type="inferred from homology"/>
<reference key="1">
    <citation type="journal article" date="2007" name="Genome Biol.">
        <title>Characterization and modeling of the Haemophilus influenzae core and supragenomes based on the complete genomic sequences of Rd and 12 clinical nontypeable strains.</title>
        <authorList>
            <person name="Hogg J.S."/>
            <person name="Hu F.Z."/>
            <person name="Janto B."/>
            <person name="Boissy R."/>
            <person name="Hayes J."/>
            <person name="Keefe R."/>
            <person name="Post J.C."/>
            <person name="Ehrlich G.D."/>
        </authorList>
    </citation>
    <scope>NUCLEOTIDE SEQUENCE [LARGE SCALE GENOMIC DNA]</scope>
    <source>
        <strain>PittEE</strain>
    </source>
</reference>